<proteinExistence type="evidence at transcript level"/>
<accession>Q7Y0C8</accession>
<gene>
    <name type="primary">CYP74A1</name>
    <name type="synonym">AOS1</name>
    <name type="ordered locus">Os03g0767000</name>
    <name type="ordered locus">LOC_Os03g55800</name>
    <name type="ORF">OSJNBa0079B15.7</name>
    <name type="ORF">OSJNBb0106M04.24</name>
</gene>
<sequence>MATAAACISFASPSPARVVIRRQTRASASASATDRQEVVSPKRRLPLRKVPGDYGPPVVGAIRDRYEYFYGPGGRDGFFAARVRAHRSTVVRLNMPPGPFVARDPRVVALLDAASFPVLFDTSLVDKTDLFTGTFMPSTDLTGGYRVLSYLDPSEPNHAPLKTLLFYLLSHRRQQVIPKFREVYGDLFGLMENDLARVGKADFGVHNDAAAFGFLCQGLLGRDPAKSALGRDGPKLITKWVLFQLSPLLSLGLPTLVEDTLLHSLRLPPALVKKDYDRLADFFRDAAKAVVDEGERLGIAREEAVHNILFALCFNSFGGMKILFPTLVKWLGRAGARVHGRLATEVRGAVRDNGGEVTMKALAEMPLVKSAVYEALRIEPPVAMQYGRAKRDMVVESHDYGYEVREGEMLFGYQPMATKDPRVFARPEEYVPDRFLGEDGARLLRHVVWSNGPETAAPTLHDKQCAGKDFVVLVARLLLVELFLRYDSFDVEVGTSTLGSSVTVTSLKKATF</sequence>
<reference key="1">
    <citation type="journal article" date="2004" name="Plant Cell Physiol.">
        <title>Phytochrome-mediated transcriptional up-regulation of ALLENE OXIDE SYNTHASE in rice seedlings.</title>
        <authorList>
            <person name="Haga K."/>
            <person name="Iino M."/>
        </authorList>
    </citation>
    <scope>NUCLEOTIDE SEQUENCE [MRNA]</scope>
    <scope>TISSUE SPECIFICITY</scope>
    <scope>INDUCTION</scope>
    <scope>NOMENCLATURE</scope>
    <source>
        <strain>cv. Nipponbare</strain>
        <tissue>Seedling leaf</tissue>
    </source>
</reference>
<reference key="2">
    <citation type="journal article" date="2005" name="Genome Res.">
        <title>Sequence, annotation, and analysis of synteny between rice chromosome 3 and diverged grass species.</title>
        <authorList>
            <consortium name="The rice chromosome 3 sequencing consortium"/>
            <person name="Buell C.R."/>
            <person name="Yuan Q."/>
            <person name="Ouyang S."/>
            <person name="Liu J."/>
            <person name="Zhu W."/>
            <person name="Wang A."/>
            <person name="Maiti R."/>
            <person name="Haas B."/>
            <person name="Wortman J."/>
            <person name="Pertea M."/>
            <person name="Jones K.M."/>
            <person name="Kim M."/>
            <person name="Overton L."/>
            <person name="Tsitrin T."/>
            <person name="Fadrosh D."/>
            <person name="Bera J."/>
            <person name="Weaver B."/>
            <person name="Jin S."/>
            <person name="Johri S."/>
            <person name="Reardon M."/>
            <person name="Webb K."/>
            <person name="Hill J."/>
            <person name="Moffat K."/>
            <person name="Tallon L."/>
            <person name="Van Aken S."/>
            <person name="Lewis M."/>
            <person name="Utterback T."/>
            <person name="Feldblyum T."/>
            <person name="Zismann V."/>
            <person name="Iobst S."/>
            <person name="Hsiao J."/>
            <person name="de Vazeille A.R."/>
            <person name="Salzberg S.L."/>
            <person name="White O."/>
            <person name="Fraser C.M."/>
            <person name="Yu Y."/>
            <person name="Kim H."/>
            <person name="Rambo T."/>
            <person name="Currie J."/>
            <person name="Collura K."/>
            <person name="Kernodle-Thompson S."/>
            <person name="Wei F."/>
            <person name="Kudrna K."/>
            <person name="Ammiraju J.S.S."/>
            <person name="Luo M."/>
            <person name="Goicoechea J.L."/>
            <person name="Wing R.A."/>
            <person name="Henry D."/>
            <person name="Oates R."/>
            <person name="Palmer M."/>
            <person name="Pries G."/>
            <person name="Saski C."/>
            <person name="Simmons J."/>
            <person name="Soderlund C."/>
            <person name="Nelson W."/>
            <person name="de la Bastide M."/>
            <person name="Spiegel L."/>
            <person name="Nascimento L."/>
            <person name="Huang E."/>
            <person name="Preston R."/>
            <person name="Zutavern T."/>
            <person name="Palmer L."/>
            <person name="O'Shaughnessy A."/>
            <person name="Dike S."/>
            <person name="McCombie W.R."/>
            <person name="Minx P."/>
            <person name="Cordum H."/>
            <person name="Wilson R."/>
            <person name="Jin W."/>
            <person name="Lee H.R."/>
            <person name="Jiang J."/>
            <person name="Jackson S."/>
        </authorList>
    </citation>
    <scope>NUCLEOTIDE SEQUENCE [LARGE SCALE GENOMIC DNA]</scope>
    <source>
        <strain>cv. Nipponbare</strain>
    </source>
</reference>
<reference key="3">
    <citation type="journal article" date="2005" name="Nature">
        <title>The map-based sequence of the rice genome.</title>
        <authorList>
            <consortium name="International rice genome sequencing project (IRGSP)"/>
        </authorList>
    </citation>
    <scope>NUCLEOTIDE SEQUENCE [LARGE SCALE GENOMIC DNA]</scope>
    <source>
        <strain>cv. Nipponbare</strain>
    </source>
</reference>
<reference key="4">
    <citation type="journal article" date="2013" name="Rice">
        <title>Improvement of the Oryza sativa Nipponbare reference genome using next generation sequence and optical map data.</title>
        <authorList>
            <person name="Kawahara Y."/>
            <person name="de la Bastide M."/>
            <person name="Hamilton J.P."/>
            <person name="Kanamori H."/>
            <person name="McCombie W.R."/>
            <person name="Ouyang S."/>
            <person name="Schwartz D.C."/>
            <person name="Tanaka T."/>
            <person name="Wu J."/>
            <person name="Zhou S."/>
            <person name="Childs K.L."/>
            <person name="Davidson R.M."/>
            <person name="Lin H."/>
            <person name="Quesada-Ocampo L."/>
            <person name="Vaillancourt B."/>
            <person name="Sakai H."/>
            <person name="Lee S.S."/>
            <person name="Kim J."/>
            <person name="Numa H."/>
            <person name="Itoh T."/>
            <person name="Buell C.R."/>
            <person name="Matsumoto T."/>
        </authorList>
    </citation>
    <scope>GENOME REANNOTATION</scope>
    <source>
        <strain>cv. Nipponbare</strain>
    </source>
</reference>
<comment type="function">
    <text evidence="1">Involved in the biosynthesis of jasmonic acid, a growth regulator that is implicated also as a signaling molecule in plant defense. Converts 13-hydroperoxylinolenic acid to 12,13-epoxylinolenic acid.</text>
</comment>
<comment type="catalytic activity">
    <reaction evidence="1">
        <text>(13S)-hydroperoxy-(9Z,11E,15Z)-octadecatrienoate = (9Z,13S,15Z)-12,13-epoxyoctadeca-9,11,15-trienoate + H2O</text>
        <dbReference type="Rhea" id="RHEA:25074"/>
        <dbReference type="ChEBI" id="CHEBI:15377"/>
        <dbReference type="ChEBI" id="CHEBI:36438"/>
        <dbReference type="ChEBI" id="CHEBI:58757"/>
        <dbReference type="EC" id="4.2.1.92"/>
    </reaction>
    <physiologicalReaction direction="left-to-right" evidence="1">
        <dbReference type="Rhea" id="RHEA:25075"/>
    </physiologicalReaction>
</comment>
<comment type="cofactor">
    <cofactor evidence="2">
        <name>heme b</name>
        <dbReference type="ChEBI" id="CHEBI:60344"/>
    </cofactor>
</comment>
<comment type="pathway">
    <text>Lipid metabolism; oxylipin biosynthesis.</text>
</comment>
<comment type="subcellular location">
    <subcellularLocation>
        <location evidence="6">Plastid</location>
        <location evidence="6">Chloroplast membrane</location>
    </subcellularLocation>
</comment>
<comment type="tissue specificity">
    <text evidence="5">Expressed in coleoptiles, and at lower level in leaves of dark-grown seedlings.</text>
</comment>
<comment type="induction">
    <text evidence="5">Transiently induced by red (R) light, far-red (FR) light and abrasion in dark-grown seedlings. Not induced by FR light in phytochrome A (phyA) mutant.</text>
</comment>
<comment type="similarity">
    <text evidence="6">Belongs to the cytochrome P450 family.</text>
</comment>
<keyword id="KW-0150">Chloroplast</keyword>
<keyword id="KW-0275">Fatty acid biosynthesis</keyword>
<keyword id="KW-0276">Fatty acid metabolism</keyword>
<keyword id="KW-0349">Heme</keyword>
<keyword id="KW-0408">Iron</keyword>
<keyword id="KW-0444">Lipid biosynthesis</keyword>
<keyword id="KW-0443">Lipid metabolism</keyword>
<keyword id="KW-0456">Lyase</keyword>
<keyword id="KW-0472">Membrane</keyword>
<keyword id="KW-0479">Metal-binding</keyword>
<keyword id="KW-0925">Oxylipin biosynthesis</keyword>
<keyword id="KW-0934">Plastid</keyword>
<keyword id="KW-1185">Reference proteome</keyword>
<keyword id="KW-0809">Transit peptide</keyword>
<feature type="transit peptide" description="Chloroplast" evidence="3">
    <location>
        <begin position="1"/>
        <end position="25"/>
    </location>
</feature>
<feature type="chain" id="PRO_0000003627" description="Allene oxide synthase 1, chloroplastic">
    <location>
        <begin position="26"/>
        <end position="512"/>
    </location>
</feature>
<feature type="region of interest" description="Disordered" evidence="4">
    <location>
        <begin position="23"/>
        <end position="43"/>
    </location>
</feature>
<feature type="binding site" evidence="2">
    <location>
        <position position="127"/>
    </location>
    <ligand>
        <name>heme b</name>
        <dbReference type="ChEBI" id="CHEBI:60344"/>
    </ligand>
</feature>
<feature type="binding site" evidence="2">
    <location>
        <position position="158"/>
    </location>
    <ligand>
        <name>heme b</name>
        <dbReference type="ChEBI" id="CHEBI:60344"/>
    </ligand>
</feature>
<feature type="binding site" evidence="2">
    <location>
        <position position="162"/>
    </location>
    <ligand>
        <name>heme b</name>
        <dbReference type="ChEBI" id="CHEBI:60344"/>
    </ligand>
</feature>
<feature type="binding site" evidence="2">
    <location>
        <position position="315"/>
    </location>
    <ligand>
        <name>(13S)-hydroperoxy-(9Z,11E,15Z)-octadecatrienoate</name>
        <dbReference type="ChEBI" id="CHEBI:58757"/>
    </ligand>
</feature>
<feature type="binding site" evidence="2">
    <location>
        <position position="463"/>
    </location>
    <ligand>
        <name>heme b</name>
        <dbReference type="ChEBI" id="CHEBI:60344"/>
    </ligand>
</feature>
<feature type="binding site" description="axial binding residue" evidence="2">
    <location>
        <position position="465"/>
    </location>
    <ligand>
        <name>heme b</name>
        <dbReference type="ChEBI" id="CHEBI:60344"/>
    </ligand>
    <ligandPart>
        <name>Fe</name>
        <dbReference type="ChEBI" id="CHEBI:18248"/>
    </ligandPart>
</feature>
<organism>
    <name type="scientific">Oryza sativa subsp. japonica</name>
    <name type="common">Rice</name>
    <dbReference type="NCBI Taxonomy" id="39947"/>
    <lineage>
        <taxon>Eukaryota</taxon>
        <taxon>Viridiplantae</taxon>
        <taxon>Streptophyta</taxon>
        <taxon>Embryophyta</taxon>
        <taxon>Tracheophyta</taxon>
        <taxon>Spermatophyta</taxon>
        <taxon>Magnoliopsida</taxon>
        <taxon>Liliopsida</taxon>
        <taxon>Poales</taxon>
        <taxon>Poaceae</taxon>
        <taxon>BOP clade</taxon>
        <taxon>Oryzoideae</taxon>
        <taxon>Oryzeae</taxon>
        <taxon>Oryzinae</taxon>
        <taxon>Oryza</taxon>
        <taxon>Oryza sativa</taxon>
    </lineage>
</organism>
<protein>
    <recommendedName>
        <fullName>Allene oxide synthase 1, chloroplastic</fullName>
        <ecNumber evidence="1">4.2.1.92</ecNumber>
    </recommendedName>
    <alternativeName>
        <fullName>Cytochrome P450 74A1</fullName>
    </alternativeName>
    <alternativeName>
        <fullName>Hydroperoxide dehydratase 1</fullName>
    </alternativeName>
</protein>
<evidence type="ECO:0000250" key="1">
    <source>
        <dbReference type="UniProtKB" id="Q7XYS3"/>
    </source>
</evidence>
<evidence type="ECO:0000250" key="2">
    <source>
        <dbReference type="UniProtKB" id="Q96242"/>
    </source>
</evidence>
<evidence type="ECO:0000255" key="3"/>
<evidence type="ECO:0000256" key="4">
    <source>
        <dbReference type="SAM" id="MobiDB-lite"/>
    </source>
</evidence>
<evidence type="ECO:0000269" key="5">
    <source>
    </source>
</evidence>
<evidence type="ECO:0000305" key="6"/>
<dbReference type="EC" id="4.2.1.92" evidence="1"/>
<dbReference type="EMBL" id="AB116527">
    <property type="protein sequence ID" value="BAD08330.1"/>
    <property type="molecule type" value="mRNA"/>
</dbReference>
<dbReference type="EMBL" id="AC099043">
    <property type="protein sequence ID" value="AAP50956.1"/>
    <property type="molecule type" value="Genomic_DNA"/>
</dbReference>
<dbReference type="EMBL" id="AC107207">
    <property type="protein sequence ID" value="AAR87328.1"/>
    <property type="molecule type" value="Genomic_DNA"/>
</dbReference>
<dbReference type="EMBL" id="AP014959">
    <property type="protein sequence ID" value="BAS86563.1"/>
    <property type="molecule type" value="Genomic_DNA"/>
</dbReference>
<dbReference type="RefSeq" id="XP_015631686.1">
    <property type="nucleotide sequence ID" value="XM_015776200.1"/>
</dbReference>
<dbReference type="SMR" id="Q7Y0C8"/>
<dbReference type="FunCoup" id="Q7Y0C8">
    <property type="interactions" value="738"/>
</dbReference>
<dbReference type="STRING" id="39947.Q7Y0C8"/>
<dbReference type="PaxDb" id="39947-Q7Y0C8"/>
<dbReference type="EnsemblPlants" id="Os03t0767000-01">
    <property type="protein sequence ID" value="Os03t0767000-01"/>
    <property type="gene ID" value="Os03g0767000"/>
</dbReference>
<dbReference type="Gramene" id="Os03t0767000-01">
    <property type="protein sequence ID" value="Os03t0767000-01"/>
    <property type="gene ID" value="Os03g0767000"/>
</dbReference>
<dbReference type="eggNOG" id="ENOG502QQNS">
    <property type="taxonomic scope" value="Eukaryota"/>
</dbReference>
<dbReference type="HOGENOM" id="CLU_045757_0_0_1"/>
<dbReference type="InParanoid" id="Q7Y0C8"/>
<dbReference type="OMA" id="DFGHYND"/>
<dbReference type="OrthoDB" id="2789670at2759"/>
<dbReference type="PlantReactome" id="R-OSA-1119332">
    <property type="pathway name" value="Jasmonic acid biosynthesis"/>
</dbReference>
<dbReference type="UniPathway" id="UPA00382"/>
<dbReference type="Proteomes" id="UP000000763">
    <property type="component" value="Chromosome 3"/>
</dbReference>
<dbReference type="Proteomes" id="UP000059680">
    <property type="component" value="Chromosome 3"/>
</dbReference>
<dbReference type="ExpressionAtlas" id="Q7Y0C8">
    <property type="expression patterns" value="baseline and differential"/>
</dbReference>
<dbReference type="GO" id="GO:0031969">
    <property type="term" value="C:chloroplast membrane"/>
    <property type="evidence" value="ECO:0007669"/>
    <property type="project" value="UniProtKB-SubCell"/>
</dbReference>
<dbReference type="GO" id="GO:0009978">
    <property type="term" value="F:allene oxide synthase activity"/>
    <property type="evidence" value="ECO:0007669"/>
    <property type="project" value="UniProtKB-EC"/>
</dbReference>
<dbReference type="GO" id="GO:0020037">
    <property type="term" value="F:heme binding"/>
    <property type="evidence" value="ECO:0007669"/>
    <property type="project" value="InterPro"/>
</dbReference>
<dbReference type="GO" id="GO:0005506">
    <property type="term" value="F:iron ion binding"/>
    <property type="evidence" value="ECO:0007669"/>
    <property type="project" value="InterPro"/>
</dbReference>
<dbReference type="GO" id="GO:0004497">
    <property type="term" value="F:monooxygenase activity"/>
    <property type="evidence" value="ECO:0000318"/>
    <property type="project" value="GO_Central"/>
</dbReference>
<dbReference type="GO" id="GO:0016705">
    <property type="term" value="F:oxidoreductase activity, acting on paired donors, with incorporation or reduction of molecular oxygen"/>
    <property type="evidence" value="ECO:0007669"/>
    <property type="project" value="InterPro"/>
</dbReference>
<dbReference type="GO" id="GO:0050832">
    <property type="term" value="P:defense response to fungus"/>
    <property type="evidence" value="ECO:0007669"/>
    <property type="project" value="EnsemblPlants"/>
</dbReference>
<dbReference type="GO" id="GO:0009695">
    <property type="term" value="P:jasmonic acid biosynthetic process"/>
    <property type="evidence" value="ECO:0007669"/>
    <property type="project" value="EnsemblPlants"/>
</dbReference>
<dbReference type="GO" id="GO:0031408">
    <property type="term" value="P:oxylipin biosynthetic process"/>
    <property type="evidence" value="ECO:0007669"/>
    <property type="project" value="UniProtKB-UniPathway"/>
</dbReference>
<dbReference type="GO" id="GO:0009753">
    <property type="term" value="P:response to jasmonic acid"/>
    <property type="evidence" value="ECO:0007669"/>
    <property type="project" value="EnsemblPlants"/>
</dbReference>
<dbReference type="GO" id="GO:0009611">
    <property type="term" value="P:response to wounding"/>
    <property type="evidence" value="ECO:0007669"/>
    <property type="project" value="EnsemblPlants"/>
</dbReference>
<dbReference type="CDD" id="cd11071">
    <property type="entry name" value="CYP74"/>
    <property type="match status" value="1"/>
</dbReference>
<dbReference type="FunFam" id="1.10.630.10:FF:000024">
    <property type="entry name" value="Allene oxide synthase, chloroplastic"/>
    <property type="match status" value="1"/>
</dbReference>
<dbReference type="Gene3D" id="1.10.630.10">
    <property type="entry name" value="Cytochrome P450"/>
    <property type="match status" value="1"/>
</dbReference>
<dbReference type="InterPro" id="IPR001128">
    <property type="entry name" value="Cyt_P450"/>
</dbReference>
<dbReference type="InterPro" id="IPR002403">
    <property type="entry name" value="Cyt_P450_E_grp-IV"/>
</dbReference>
<dbReference type="InterPro" id="IPR036396">
    <property type="entry name" value="Cyt_P450_sf"/>
</dbReference>
<dbReference type="PANTHER" id="PTHR24286:SF255">
    <property type="entry name" value="ALLENE OXIDE SYNTHASE, CHLOROPLASTIC"/>
    <property type="match status" value="1"/>
</dbReference>
<dbReference type="PANTHER" id="PTHR24286">
    <property type="entry name" value="CYTOCHROME P450 26"/>
    <property type="match status" value="1"/>
</dbReference>
<dbReference type="Pfam" id="PF00067">
    <property type="entry name" value="p450"/>
    <property type="match status" value="1"/>
</dbReference>
<dbReference type="PRINTS" id="PR00465">
    <property type="entry name" value="EP450IV"/>
</dbReference>
<dbReference type="SUPFAM" id="SSF48264">
    <property type="entry name" value="Cytochrome P450"/>
    <property type="match status" value="1"/>
</dbReference>
<name>C74A1_ORYSJ</name>